<keyword id="KW-1003">Cell membrane</keyword>
<keyword id="KW-0406">Ion transport</keyword>
<keyword id="KW-0472">Membrane</keyword>
<keyword id="KW-0630">Potassium</keyword>
<keyword id="KW-0633">Potassium transport</keyword>
<keyword id="KW-0812">Transmembrane</keyword>
<keyword id="KW-1133">Transmembrane helix</keyword>
<keyword id="KW-0813">Transport</keyword>
<feature type="chain" id="PRO_0000166512" description="Potassium-transporting ATPase potassium-binding subunit">
    <location>
        <begin position="1"/>
        <end position="556"/>
    </location>
</feature>
<feature type="transmembrane region" description="Helical" evidence="1">
    <location>
        <begin position="1"/>
        <end position="21"/>
    </location>
</feature>
<feature type="transmembrane region" description="Helical" evidence="1">
    <location>
        <begin position="60"/>
        <end position="80"/>
    </location>
</feature>
<feature type="transmembrane region" description="Helical" evidence="1">
    <location>
        <begin position="130"/>
        <end position="150"/>
    </location>
</feature>
<feature type="transmembrane region" description="Helical" evidence="1">
    <location>
        <begin position="173"/>
        <end position="193"/>
    </location>
</feature>
<feature type="transmembrane region" description="Helical" evidence="1">
    <location>
        <begin position="245"/>
        <end position="265"/>
    </location>
</feature>
<feature type="transmembrane region" description="Helical" evidence="1">
    <location>
        <begin position="281"/>
        <end position="301"/>
    </location>
</feature>
<feature type="transmembrane region" description="Helical" evidence="1">
    <location>
        <begin position="374"/>
        <end position="394"/>
    </location>
</feature>
<feature type="transmembrane region" description="Helical" evidence="1">
    <location>
        <begin position="416"/>
        <end position="436"/>
    </location>
</feature>
<feature type="transmembrane region" description="Helical" evidence="1">
    <location>
        <begin position="482"/>
        <end position="502"/>
    </location>
</feature>
<feature type="transmembrane region" description="Helical" evidence="1">
    <location>
        <begin position="529"/>
        <end position="549"/>
    </location>
</feature>
<organism>
    <name type="scientific">Cutibacterium acnes (strain DSM 16379 / KPA171202)</name>
    <name type="common">Propionibacterium acnes</name>
    <dbReference type="NCBI Taxonomy" id="267747"/>
    <lineage>
        <taxon>Bacteria</taxon>
        <taxon>Bacillati</taxon>
        <taxon>Actinomycetota</taxon>
        <taxon>Actinomycetes</taxon>
        <taxon>Propionibacteriales</taxon>
        <taxon>Propionibacteriaceae</taxon>
        <taxon>Cutibacterium</taxon>
    </lineage>
</organism>
<gene>
    <name evidence="1" type="primary">kdpA</name>
    <name type="ordered locus">PPA0115</name>
</gene>
<proteinExistence type="inferred from homology"/>
<evidence type="ECO:0000255" key="1">
    <source>
        <dbReference type="HAMAP-Rule" id="MF_00275"/>
    </source>
</evidence>
<reference key="1">
    <citation type="journal article" date="2004" name="Science">
        <title>The complete genome sequence of Propionibacterium acnes, a commensal of human skin.</title>
        <authorList>
            <person name="Brueggemann H."/>
            <person name="Henne A."/>
            <person name="Hoster F."/>
            <person name="Liesegang H."/>
            <person name="Wiezer A."/>
            <person name="Strittmatter A."/>
            <person name="Hujer S."/>
            <person name="Duerre P."/>
            <person name="Gottschalk G."/>
        </authorList>
    </citation>
    <scope>NUCLEOTIDE SEQUENCE [LARGE SCALE GENOMIC DNA]</scope>
    <source>
        <strain>DSM 16379 / KPA171202</strain>
    </source>
</reference>
<sequence length="556" mass="58602">MTWICFLAGLALLAIALGIAQHHLGTYMARVFTSDKDTRVETWCYRVMGVNPRAGQTWKSYARAVLAFSFCGVVFLYALQRLQPWLPWSLGKGSVNPAVSFNTAISFVTNTNWQAYSPEATLGHFVQLAGLCVQNFVSAATGIAIAVALIRGFVGHGEHTIGNFWVDLTRCTLRILMPIAAVAAFLLIAGGAVQNFTGFLHVTGVAGGNQVIPGGPVASQEAIKELGTNGGGFFNGNSSHPFENPQPWTNMLEIFLILLIPFSLPRTFGKMVEDVRQGRAILAAMVVLFTVNLCAMAAAEFSGHGTAARLAGAPMEGKEQRFGLAQSVLFANSTTMTSTGAVDSMHDSFTAIGGMFTLLNMMLGEISPGGVGSGLYGMLVIAVIAVFIAGLLVGRTPEYLGKKIGPREMKLSDLYILVMPTLVLCGVALSLAVPGLRSSVNTSIANPGEHGLSELVYAFTSAANNNGSAFAGLDASTNWLCAALGAAMLLGRFVPIILILALSGALVEREPVPVTAGTLPTHNALFTTLIVFTAILVTALVFFPVLTLGPLAEGLI</sequence>
<protein>
    <recommendedName>
        <fullName evidence="1">Potassium-transporting ATPase potassium-binding subunit</fullName>
    </recommendedName>
    <alternativeName>
        <fullName evidence="1">ATP phosphohydrolase [potassium-transporting] A chain</fullName>
    </alternativeName>
    <alternativeName>
        <fullName evidence="1">Potassium-binding and translocating subunit A</fullName>
    </alternativeName>
    <alternativeName>
        <fullName evidence="1">Potassium-translocating ATPase A chain</fullName>
    </alternativeName>
</protein>
<accession>Q6ABJ2</accession>
<name>KDPA_CUTAK</name>
<dbReference type="EMBL" id="AE017283">
    <property type="protein sequence ID" value="AAT81875.1"/>
    <property type="molecule type" value="Genomic_DNA"/>
</dbReference>
<dbReference type="RefSeq" id="WP_002515780.1">
    <property type="nucleotide sequence ID" value="NZ_CP025935.1"/>
</dbReference>
<dbReference type="SMR" id="Q6ABJ2"/>
<dbReference type="EnsemblBacteria" id="AAT81875">
    <property type="protein sequence ID" value="AAT81875"/>
    <property type="gene ID" value="PPA0115"/>
</dbReference>
<dbReference type="GeneID" id="92856103"/>
<dbReference type="KEGG" id="pac:PPA0115"/>
<dbReference type="PATRIC" id="fig|267747.3.peg.119"/>
<dbReference type="eggNOG" id="COG2060">
    <property type="taxonomic scope" value="Bacteria"/>
</dbReference>
<dbReference type="HOGENOM" id="CLU_018614_3_0_11"/>
<dbReference type="Proteomes" id="UP000000603">
    <property type="component" value="Chromosome"/>
</dbReference>
<dbReference type="GO" id="GO:0005886">
    <property type="term" value="C:plasma membrane"/>
    <property type="evidence" value="ECO:0007669"/>
    <property type="project" value="UniProtKB-SubCell"/>
</dbReference>
<dbReference type="GO" id="GO:0008556">
    <property type="term" value="F:P-type potassium transmembrane transporter activity"/>
    <property type="evidence" value="ECO:0007669"/>
    <property type="project" value="InterPro"/>
</dbReference>
<dbReference type="GO" id="GO:0030955">
    <property type="term" value="F:potassium ion binding"/>
    <property type="evidence" value="ECO:0007669"/>
    <property type="project" value="UniProtKB-UniRule"/>
</dbReference>
<dbReference type="HAMAP" id="MF_00275">
    <property type="entry name" value="KdpA"/>
    <property type="match status" value="1"/>
</dbReference>
<dbReference type="InterPro" id="IPR004623">
    <property type="entry name" value="KdpA"/>
</dbReference>
<dbReference type="NCBIfam" id="TIGR00680">
    <property type="entry name" value="kdpA"/>
    <property type="match status" value="1"/>
</dbReference>
<dbReference type="PANTHER" id="PTHR30607">
    <property type="entry name" value="POTASSIUM-TRANSPORTING ATPASE A CHAIN"/>
    <property type="match status" value="1"/>
</dbReference>
<dbReference type="PANTHER" id="PTHR30607:SF2">
    <property type="entry name" value="POTASSIUM-TRANSPORTING ATPASE POTASSIUM-BINDING SUBUNIT"/>
    <property type="match status" value="1"/>
</dbReference>
<dbReference type="Pfam" id="PF03814">
    <property type="entry name" value="KdpA"/>
    <property type="match status" value="1"/>
</dbReference>
<dbReference type="PIRSF" id="PIRSF001294">
    <property type="entry name" value="K_ATPaseA"/>
    <property type="match status" value="1"/>
</dbReference>
<comment type="function">
    <text evidence="1">Part of the high-affinity ATP-driven potassium transport (or Kdp) system, which catalyzes the hydrolysis of ATP coupled with the electrogenic transport of potassium into the cytoplasm. This subunit binds the extracellular potassium ions and delivers the ions to the membrane domain of KdpB through an intramembrane tunnel.</text>
</comment>
<comment type="subunit">
    <text evidence="1">The system is composed of three essential subunits: KdpA, KdpB and KdpC.</text>
</comment>
<comment type="subcellular location">
    <subcellularLocation>
        <location evidence="1">Cell membrane</location>
        <topology evidence="1">Multi-pass membrane protein</topology>
    </subcellularLocation>
</comment>
<comment type="similarity">
    <text evidence="1">Belongs to the KdpA family.</text>
</comment>